<organism>
    <name type="scientific">Acanthamoeba polyphaga mimivirus</name>
    <name type="common">APMV</name>
    <dbReference type="NCBI Taxonomy" id="212035"/>
    <lineage>
        <taxon>Viruses</taxon>
        <taxon>Varidnaviria</taxon>
        <taxon>Bamfordvirae</taxon>
        <taxon>Nucleocytoviricota</taxon>
        <taxon>Megaviricetes</taxon>
        <taxon>Imitervirales</taxon>
        <taxon>Mimiviridae</taxon>
        <taxon>Megamimivirinae</taxon>
        <taxon>Mimivirus</taxon>
        <taxon>Mimivirus bradfordmassiliense</taxon>
    </lineage>
</organism>
<accession>Q5UPA4</accession>
<protein>
    <recommendedName>
        <fullName>Putative KilA-N domain-containing protein L33</fullName>
    </recommendedName>
</protein>
<dbReference type="EMBL" id="AY653733">
    <property type="protein sequence ID" value="AAV50308.1"/>
    <property type="molecule type" value="Genomic_DNA"/>
</dbReference>
<dbReference type="SMR" id="Q5UPA4"/>
<dbReference type="KEGG" id="vg:9924611"/>
<dbReference type="OrthoDB" id="28003at10239"/>
<dbReference type="Proteomes" id="UP000001134">
    <property type="component" value="Genome"/>
</dbReference>
<dbReference type="GO" id="GO:0003677">
    <property type="term" value="F:DNA binding"/>
    <property type="evidence" value="ECO:0007669"/>
    <property type="project" value="InterPro"/>
</dbReference>
<dbReference type="InterPro" id="IPR036887">
    <property type="entry name" value="HTH_APSES_sf"/>
</dbReference>
<dbReference type="InterPro" id="IPR018004">
    <property type="entry name" value="KilA/APSES_HTH"/>
</dbReference>
<dbReference type="InterPro" id="IPR017880">
    <property type="entry name" value="KilA_N"/>
</dbReference>
<dbReference type="Pfam" id="PF04383">
    <property type="entry name" value="KilA-N"/>
    <property type="match status" value="1"/>
</dbReference>
<dbReference type="SMART" id="SM01252">
    <property type="entry name" value="KilA-N"/>
    <property type="match status" value="1"/>
</dbReference>
<dbReference type="SUPFAM" id="SSF54616">
    <property type="entry name" value="DNA-binding domain of Mlu1-box binding protein MBP1"/>
    <property type="match status" value="1"/>
</dbReference>
<dbReference type="PROSITE" id="PS51301">
    <property type="entry name" value="KILA_N"/>
    <property type="match status" value="1"/>
</dbReference>
<keyword id="KW-1185">Reference proteome</keyword>
<sequence length="246" mass="28927">MSKKISRSIDTIIFVDINSRYTKCQYCDIYIIIDNENGYINITSLCSIISKKIGKEKTFKQWKKNKTSKEQVEEMAKLEKISEKKLFIDICSGPKKMQGKYIHPGLVTLVVHWISPEFAAKVSLWIEEWRRYSSNNSDKYYESLLTANPSYNSQREKEIQEKLLGKYGGEIEVETKTGRIDLMTNDKIIEIKNYYKWKNAIGQLFAYSIYYPDKKKCLYLFNVGTNDLNEIKKVCKKYDVKLKVYD</sequence>
<gene>
    <name type="ordered locus">MIMI_L33</name>
</gene>
<evidence type="ECO:0000255" key="1">
    <source>
        <dbReference type="PROSITE-ProRule" id="PRU00631"/>
    </source>
</evidence>
<name>YL033_MIMIV</name>
<organismHost>
    <name type="scientific">Acanthamoeba polyphaga</name>
    <name type="common">Amoeba</name>
    <dbReference type="NCBI Taxonomy" id="5757"/>
</organismHost>
<feature type="chain" id="PRO_0000247239" description="Putative KilA-N domain-containing protein L33">
    <location>
        <begin position="1"/>
        <end position="246"/>
    </location>
</feature>
<feature type="domain" description="KilA-N" evidence="1">
    <location>
        <begin position="20"/>
        <end position="129"/>
    </location>
</feature>
<reference key="1">
    <citation type="journal article" date="2004" name="Science">
        <title>The 1.2-megabase genome sequence of Mimivirus.</title>
        <authorList>
            <person name="Raoult D."/>
            <person name="Audic S."/>
            <person name="Robert C."/>
            <person name="Abergel C."/>
            <person name="Renesto P."/>
            <person name="Ogata H."/>
            <person name="La Scola B."/>
            <person name="Susan M."/>
            <person name="Claverie J.-M."/>
        </authorList>
    </citation>
    <scope>NUCLEOTIDE SEQUENCE [LARGE SCALE GENOMIC DNA]</scope>
    <source>
        <strain>Rowbotham-Bradford</strain>
    </source>
</reference>
<proteinExistence type="predicted"/>